<feature type="chain" id="PRO_0000205860" description="Nicotinamide phosphoribosyltransferase">
    <location>
        <begin position="1"/>
        <end position="451"/>
    </location>
</feature>
<feature type="binding site" evidence="1">
    <location>
        <position position="209"/>
    </location>
    <ligand>
        <name>diphosphate</name>
        <dbReference type="ChEBI" id="CHEBI:33019"/>
    </ligand>
</feature>
<feature type="binding site" evidence="1">
    <location>
        <position position="232"/>
    </location>
    <ligand>
        <name>beta-nicotinamide D-ribonucleotide</name>
        <dbReference type="ChEBI" id="CHEBI:14649"/>
    </ligand>
</feature>
<feature type="binding site" evidence="1">
    <location>
        <position position="248"/>
    </location>
    <ligand>
        <name>diphosphate</name>
        <dbReference type="ChEBI" id="CHEBI:33019"/>
    </ligand>
</feature>
<feature type="binding site" evidence="1">
    <location>
        <begin position="309"/>
        <end position="311"/>
    </location>
    <ligand>
        <name>beta-nicotinamide D-ribonucleotide</name>
        <dbReference type="ChEBI" id="CHEBI:14649"/>
    </ligand>
</feature>
<feature type="binding site" evidence="1">
    <location>
        <position position="309"/>
    </location>
    <ligand>
        <name>diphosphate</name>
        <dbReference type="ChEBI" id="CHEBI:33019"/>
    </ligand>
</feature>
<feature type="binding site" evidence="1">
    <location>
        <begin position="364"/>
        <end position="365"/>
    </location>
    <ligand>
        <name>beta-nicotinamide D-ribonucleotide</name>
        <dbReference type="ChEBI" id="CHEBI:14649"/>
    </ligand>
</feature>
<feature type="binding site" evidence="1">
    <location>
        <position position="403"/>
    </location>
    <ligand>
        <name>beta-nicotinamide D-ribonucleotide</name>
        <dbReference type="ChEBI" id="CHEBI:14649"/>
    </ligand>
</feature>
<reference key="1">
    <citation type="journal article" date="1996" name="Nucleic Acids Res.">
        <title>Complete sequence analysis of the genome of the bacterium Mycoplasma pneumoniae.</title>
        <authorList>
            <person name="Himmelreich R."/>
            <person name="Hilbert H."/>
            <person name="Plagens H."/>
            <person name="Pirkl E."/>
            <person name="Li B.-C."/>
            <person name="Herrmann R."/>
        </authorList>
    </citation>
    <scope>NUCLEOTIDE SEQUENCE [LARGE SCALE GENOMIC DNA]</scope>
    <source>
        <strain>ATCC 29342 / M129 / Subtype 1</strain>
    </source>
</reference>
<evidence type="ECO:0000250" key="1">
    <source>
        <dbReference type="UniProtKB" id="P43490"/>
    </source>
</evidence>
<evidence type="ECO:0000250" key="2">
    <source>
        <dbReference type="UniProtKB" id="Q6FDK2"/>
    </source>
</evidence>
<evidence type="ECO:0000305" key="3"/>
<accession>P75067</accession>
<sequence>MVQTPSEINTHLKHLLACDAYKLSHRLMYPNDTTNLYSCLTARGGRGGFPNFVWNHEFAKKIILEVFGNFCDSVLAVQNDPGLAQALTDKVTTVFGDPQFGLEFTQHICYLANFLKQHHQLPLTVKIHQSSEGLAFRTPLVTITGSDQMVPELVWLVNYFETVLLENIWLYQTTLTVAQSLKLLLERYANETADNTEFTHFQCHDFSMRGMSSLQSALYVANAHLQYFSGSDTILGGVAAKSILASEHSVMCADGQEGELNTFKRLLEQFPNKNLSLVIDSYDMWHVLDNILPQLKDLVLQRQEKLYLRPDSGNFETLICQGKRFNPEDKTTWGVIDYLDYHFGSTVNQKGYKVLNQKLGIVYGDGITYERIEYILEQLKQRGFCSSNIVFGVGSTTYQNLNRDTLGFVYKLTAIKKGNTWHDVTKSPITDPTKQSIGGRFDNPNLIQVYG</sequence>
<protein>
    <recommendedName>
        <fullName evidence="2">Nicotinamide phosphoribosyltransferase</fullName>
        <shortName evidence="2">NAmPRTase</shortName>
        <shortName evidence="2">NMPRT</shortName>
        <shortName evidence="2">Nampt</shortName>
        <ecNumber evidence="2">2.4.2.12</ecNumber>
    </recommendedName>
</protein>
<keyword id="KW-0328">Glycosyltransferase</keyword>
<keyword id="KW-0662">Pyridine nucleotide biosynthesis</keyword>
<keyword id="KW-1185">Reference proteome</keyword>
<keyword id="KW-0808">Transferase</keyword>
<name>NAMPT_MYCPN</name>
<gene>
    <name type="ordered locus">MPN_047</name>
    <name type="ORF">D09_orf451</name>
    <name type="ORF">MP107</name>
</gene>
<dbReference type="EC" id="2.4.2.12" evidence="2"/>
<dbReference type="EMBL" id="U00089">
    <property type="protein sequence ID" value="AAB95755.1"/>
    <property type="molecule type" value="Genomic_DNA"/>
</dbReference>
<dbReference type="PIR" id="S73433">
    <property type="entry name" value="S73433"/>
</dbReference>
<dbReference type="RefSeq" id="NP_109735.1">
    <property type="nucleotide sequence ID" value="NC_000912.1"/>
</dbReference>
<dbReference type="RefSeq" id="WP_010874404.1">
    <property type="nucleotide sequence ID" value="NZ_OU342337.1"/>
</dbReference>
<dbReference type="SMR" id="P75067"/>
<dbReference type="IntAct" id="P75067">
    <property type="interactions" value="1"/>
</dbReference>
<dbReference type="STRING" id="272634.MPN_047"/>
<dbReference type="EnsemblBacteria" id="AAB95755">
    <property type="protein sequence ID" value="AAB95755"/>
    <property type="gene ID" value="MPN_047"/>
</dbReference>
<dbReference type="KEGG" id="mpn:MPN_047"/>
<dbReference type="PATRIC" id="fig|272634.6.peg.47"/>
<dbReference type="HOGENOM" id="CLU_012550_2_0_14"/>
<dbReference type="OrthoDB" id="394882at2"/>
<dbReference type="BioCyc" id="MPNE272634:G1GJ3-65-MONOMER"/>
<dbReference type="UniPathway" id="UPA00253">
    <property type="reaction ID" value="UER00890"/>
</dbReference>
<dbReference type="Proteomes" id="UP000000808">
    <property type="component" value="Chromosome"/>
</dbReference>
<dbReference type="GO" id="GO:0047280">
    <property type="term" value="F:nicotinamide phosphoribosyltransferase activity"/>
    <property type="evidence" value="ECO:0007669"/>
    <property type="project" value="TreeGrafter"/>
</dbReference>
<dbReference type="GO" id="GO:0009435">
    <property type="term" value="P:NAD biosynthetic process"/>
    <property type="evidence" value="ECO:0007669"/>
    <property type="project" value="UniProtKB-UniPathway"/>
</dbReference>
<dbReference type="Gene3D" id="3.20.20.70">
    <property type="entry name" value="Aldolase class I"/>
    <property type="match status" value="1"/>
</dbReference>
<dbReference type="InterPro" id="IPR013785">
    <property type="entry name" value="Aldolase_TIM"/>
</dbReference>
<dbReference type="InterPro" id="IPR041525">
    <property type="entry name" value="N/Namide_PRibTrfase"/>
</dbReference>
<dbReference type="InterPro" id="IPR016471">
    <property type="entry name" value="Nicotinamide_PRibTrfase"/>
</dbReference>
<dbReference type="InterPro" id="IPR036068">
    <property type="entry name" value="Nicotinate_pribotase-like_C"/>
</dbReference>
<dbReference type="NCBIfam" id="NF006629">
    <property type="entry name" value="PRK09198.1"/>
    <property type="match status" value="1"/>
</dbReference>
<dbReference type="PANTHER" id="PTHR43816">
    <property type="entry name" value="NICOTINAMIDE PHOSPHORIBOSYLTRANSFERASE"/>
    <property type="match status" value="1"/>
</dbReference>
<dbReference type="PANTHER" id="PTHR43816:SF1">
    <property type="entry name" value="NICOTINAMIDE PHOSPHORIBOSYLTRANSFERASE"/>
    <property type="match status" value="1"/>
</dbReference>
<dbReference type="Pfam" id="PF04095">
    <property type="entry name" value="NAPRTase"/>
    <property type="match status" value="1"/>
</dbReference>
<dbReference type="PIRSF" id="PIRSF005943">
    <property type="entry name" value="NMPRT"/>
    <property type="match status" value="1"/>
</dbReference>
<dbReference type="SUPFAM" id="SSF51690">
    <property type="entry name" value="Nicotinate/Quinolinate PRTase C-terminal domain-like"/>
    <property type="match status" value="1"/>
</dbReference>
<proteinExistence type="inferred from homology"/>
<comment type="function">
    <text evidence="2">Catalyzes the condensation of nicotinamide with 5-phosphoribosyl-1-pyrophosphate to yield nicotinamide mononucleotide, an intermediate in the biosynthesis of NAD.</text>
</comment>
<comment type="catalytic activity">
    <reaction evidence="2">
        <text>beta-nicotinamide D-ribonucleotide + diphosphate = 5-phospho-alpha-D-ribose 1-diphosphate + nicotinamide + H(+)</text>
        <dbReference type="Rhea" id="RHEA:16149"/>
        <dbReference type="ChEBI" id="CHEBI:14649"/>
        <dbReference type="ChEBI" id="CHEBI:15378"/>
        <dbReference type="ChEBI" id="CHEBI:17154"/>
        <dbReference type="ChEBI" id="CHEBI:33019"/>
        <dbReference type="ChEBI" id="CHEBI:58017"/>
        <dbReference type="EC" id="2.4.2.12"/>
    </reaction>
</comment>
<comment type="pathway">
    <text evidence="2">Cofactor biosynthesis; NAD(+) biosynthesis; nicotinamide D-ribonucleotide from 5-phospho-alpha-D-ribose 1-diphosphate and nicotinamide: step 1/1.</text>
</comment>
<comment type="similarity">
    <text evidence="3">Belongs to the NAPRTase family.</text>
</comment>
<organism>
    <name type="scientific">Mycoplasma pneumoniae (strain ATCC 29342 / M129 / Subtype 1)</name>
    <name type="common">Mycoplasmoides pneumoniae</name>
    <dbReference type="NCBI Taxonomy" id="272634"/>
    <lineage>
        <taxon>Bacteria</taxon>
        <taxon>Bacillati</taxon>
        <taxon>Mycoplasmatota</taxon>
        <taxon>Mycoplasmoidales</taxon>
        <taxon>Mycoplasmoidaceae</taxon>
        <taxon>Mycoplasmoides</taxon>
    </lineage>
</organism>